<sequence>MELWSELQSYQNLRRLLELASARTSSCWRILFGSTLTNVIYRAKEEYSSRFADLLSHNPGIFASLNLGHHSFFQEIVIRNLDFSSPGRTVSGLAFICFILDQWSAQTHLSQGYTLDYMAMALWRTLLRRKRVLGCLPAQRPHGLDPVQEEEEEEENLRAGLDPSTEL</sequence>
<proteinExistence type="inferred from homology"/>
<comment type="function">
    <text evidence="1">Putative adenovirus Bcl-2 homolog that inhibits apoptosis induced by TNF or FAS pathways, as well as p53-mediated apoptosis. Without E1B 19K function, virus production is compromised because of premature death of host cell. Interacts with Bax protein in cell lysates (By similarity).</text>
</comment>
<comment type="subcellular location">
    <subcellularLocation>
        <location evidence="1">Host cell membrane</location>
    </subcellularLocation>
    <subcellularLocation>
        <location evidence="1">Host nucleus envelope</location>
    </subcellularLocation>
    <subcellularLocation>
        <location evidence="1">Host nucleus lamina</location>
    </subcellularLocation>
    <text evidence="1">Associated with the plasma and nuclear membranes, and with the insoluble nuclear lamina.</text>
</comment>
<comment type="similarity">
    <text evidence="3">Belongs to the adenoviridae E1B 19 kDa protein family.</text>
</comment>
<keyword id="KW-0053">Apoptosis</keyword>
<keyword id="KW-0244">Early protein</keyword>
<keyword id="KW-1032">Host cell membrane</keyword>
<keyword id="KW-1043">Host membrane</keyword>
<keyword id="KW-1048">Host nucleus</keyword>
<keyword id="KW-0945">Host-virus interaction</keyword>
<keyword id="KW-1081">Inhibition of host apoptosis by viral BCL2-like protein</keyword>
<keyword id="KW-0472">Membrane</keyword>
<keyword id="KW-1119">Modulation of host cell apoptosis by virus</keyword>
<keyword id="KW-1185">Reference proteome</keyword>
<organism>
    <name type="scientific">Human adenovirus F serotype 40</name>
    <name type="common">HAdV-40</name>
    <name type="synonym">Human adenovirus 40</name>
    <dbReference type="NCBI Taxonomy" id="28284"/>
    <lineage>
        <taxon>Viruses</taxon>
        <taxon>Varidnaviria</taxon>
        <taxon>Bamfordvirae</taxon>
        <taxon>Preplasmiviricota</taxon>
        <taxon>Tectiliviricetes</taxon>
        <taxon>Rowavirales</taxon>
        <taxon>Adenoviridae</taxon>
        <taxon>Mastadenovirus</taxon>
        <taxon>Human mastadenovirus F</taxon>
    </lineage>
</organism>
<feature type="chain" id="PRO_0000221715" description="E1B protein, small T-antigen">
    <location>
        <begin position="1"/>
        <end position="167"/>
    </location>
</feature>
<feature type="region of interest" description="Disordered" evidence="2">
    <location>
        <begin position="143"/>
        <end position="167"/>
    </location>
</feature>
<feature type="sequence conflict" description="In Ref. 2; AAA42443." evidence="3" ref="2">
    <original>T</original>
    <variation>A</variation>
    <location>
        <position position="37"/>
    </location>
</feature>
<feature type="sequence conflict" description="In Ref. 2; AAA42443." evidence="3" ref="2">
    <original>QR</original>
    <variation>HG</variation>
    <location>
        <begin position="139"/>
        <end position="140"/>
    </location>
</feature>
<feature type="sequence conflict" description="In Ref. 2; AAA42443." evidence="3" ref="2">
    <location>
        <position position="155"/>
    </location>
</feature>
<name>E1BS_ADE40</name>
<organismHost>
    <name type="scientific">Homo sapiens</name>
    <name type="common">Human</name>
    <dbReference type="NCBI Taxonomy" id="9606"/>
</organismHost>
<reference key="1">
    <citation type="journal article" date="1987" name="Gene">
        <title>Structure and organization of the left-terminal DNA regions of fastidious adenovirus types 40 and 41.</title>
        <authorList>
            <person name="van Loon A.E."/>
            <person name="Ligtenberg M."/>
            <person name="Reemst A.M.C.B."/>
            <person name="Sussenbach J.S."/>
            <person name="Rozijn T.H."/>
        </authorList>
    </citation>
    <scope>NUCLEOTIDE SEQUENCE [GENOMIC DNA]</scope>
</reference>
<reference key="2">
    <citation type="journal article" date="1988" name="Virology">
        <title>Characterization of adenovirus type 40 E1 region.</title>
        <authorList>
            <person name="Ishino M."/>
            <person name="Ohashi Y."/>
            <person name="Emoto T."/>
            <person name="Sawada Y."/>
            <person name="Fujinaga K."/>
        </authorList>
    </citation>
    <scope>NUCLEOTIDE SEQUENCE [GENOMIC DNA]</scope>
</reference>
<accession>P10543</accession>
<protein>
    <recommendedName>
        <fullName>E1B protein, small T-antigen</fullName>
    </recommendedName>
    <alternativeName>
        <fullName>E1B 19 kDa protein</fullName>
        <shortName>E1B-19K</shortName>
    </alternativeName>
</protein>
<dbReference type="EMBL" id="M21276">
    <property type="protein sequence ID" value="AAA42443.1"/>
    <property type="molecule type" value="Genomic_DNA"/>
</dbReference>
<dbReference type="EMBL" id="M18288">
    <property type="protein sequence ID" value="AAA42448.1"/>
    <property type="molecule type" value="Genomic_RNA"/>
</dbReference>
<dbReference type="EMBL" id="L19443">
    <property type="protein sequence ID" value="AAC13957.1"/>
    <property type="molecule type" value="Genomic_DNA"/>
</dbReference>
<dbReference type="PIR" id="B29195">
    <property type="entry name" value="WMADP5"/>
</dbReference>
<dbReference type="RefSeq" id="NP_040848.1">
    <property type="nucleotide sequence ID" value="NC_001454.1"/>
</dbReference>
<dbReference type="GeneID" id="2715936"/>
<dbReference type="Proteomes" id="UP000151954">
    <property type="component" value="Segment"/>
</dbReference>
<dbReference type="GO" id="GO:0044203">
    <property type="term" value="C:host cell nuclear lamina"/>
    <property type="evidence" value="ECO:0007669"/>
    <property type="project" value="UniProtKB-SubCell"/>
</dbReference>
<dbReference type="GO" id="GO:0020002">
    <property type="term" value="C:host cell plasma membrane"/>
    <property type="evidence" value="ECO:0007669"/>
    <property type="project" value="UniProtKB-SubCell"/>
</dbReference>
<dbReference type="GO" id="GO:0016020">
    <property type="term" value="C:membrane"/>
    <property type="evidence" value="ECO:0007669"/>
    <property type="project" value="UniProtKB-KW"/>
</dbReference>
<dbReference type="GO" id="GO:0033668">
    <property type="term" value="P:symbiont-mediated suppression of host apoptosis"/>
    <property type="evidence" value="ECO:0007669"/>
    <property type="project" value="UniProtKB-KW"/>
</dbReference>
<dbReference type="InterPro" id="IPR002924">
    <property type="entry name" value="Adenovir_t-Ag_E1B_19kDa"/>
</dbReference>
<dbReference type="InterPro" id="IPR002475">
    <property type="entry name" value="Bcl2-like"/>
</dbReference>
<dbReference type="Pfam" id="PF01691">
    <property type="entry name" value="Adeno_E1B_19K"/>
    <property type="match status" value="1"/>
</dbReference>
<dbReference type="PROSITE" id="PS50062">
    <property type="entry name" value="BCL2_FAMILY"/>
    <property type="match status" value="1"/>
</dbReference>
<evidence type="ECO:0000250" key="1"/>
<evidence type="ECO:0000256" key="2">
    <source>
        <dbReference type="SAM" id="MobiDB-lite"/>
    </source>
</evidence>
<evidence type="ECO:0000305" key="3"/>